<sequence length="208" mass="21990">MKILRIDSSPLGDASVSRQLTASIVAALRQATPDAEVSVRDLTVAPPDHLTGELMQVVKFRNLEGLTARQQEELALTDALVDEFLAADVVVIGAPMYNFTVPTQLKAWIDRIAQAGRTFRYTETGPVGLAGGKKVYIASTRGGVYSTNAAMSALDHQEAFLRTVLGFLGVTDVTVIRAEGVGMGPDARAKALAAAQQEIDALAVPVAA</sequence>
<comment type="function">
    <text evidence="1">Quinone reductase that provides resistance to thiol-specific stress caused by electrophilic quinones.</text>
</comment>
<comment type="function">
    <text evidence="1">Also exhibits azoreductase activity. Catalyzes the reductive cleavage of the azo bond in aromatic azo compounds to the corresponding amines.</text>
</comment>
<comment type="catalytic activity">
    <reaction evidence="1">
        <text>2 a quinone + NADH + H(+) = 2 a 1,4-benzosemiquinone + NAD(+)</text>
        <dbReference type="Rhea" id="RHEA:65952"/>
        <dbReference type="ChEBI" id="CHEBI:15378"/>
        <dbReference type="ChEBI" id="CHEBI:57540"/>
        <dbReference type="ChEBI" id="CHEBI:57945"/>
        <dbReference type="ChEBI" id="CHEBI:132124"/>
        <dbReference type="ChEBI" id="CHEBI:134225"/>
    </reaction>
</comment>
<comment type="catalytic activity">
    <reaction evidence="1">
        <text>N,N-dimethyl-1,4-phenylenediamine + anthranilate + 2 NAD(+) = 2-(4-dimethylaminophenyl)diazenylbenzoate + 2 NADH + 2 H(+)</text>
        <dbReference type="Rhea" id="RHEA:55872"/>
        <dbReference type="ChEBI" id="CHEBI:15378"/>
        <dbReference type="ChEBI" id="CHEBI:15783"/>
        <dbReference type="ChEBI" id="CHEBI:16567"/>
        <dbReference type="ChEBI" id="CHEBI:57540"/>
        <dbReference type="ChEBI" id="CHEBI:57945"/>
        <dbReference type="ChEBI" id="CHEBI:71579"/>
        <dbReference type="EC" id="1.7.1.17"/>
    </reaction>
</comment>
<comment type="cofactor">
    <cofactor evidence="1">
        <name>FMN</name>
        <dbReference type="ChEBI" id="CHEBI:58210"/>
    </cofactor>
    <text evidence="1">Binds 1 FMN per subunit.</text>
</comment>
<comment type="subunit">
    <text evidence="1">Homodimer.</text>
</comment>
<comment type="similarity">
    <text evidence="1">Belongs to the azoreductase type 1 family.</text>
</comment>
<proteinExistence type="inferred from homology"/>
<dbReference type="EC" id="1.6.5.-" evidence="1"/>
<dbReference type="EC" id="1.7.1.17" evidence="1"/>
<dbReference type="EMBL" id="AF216815">
    <property type="protein sequence ID" value="AAF61910.1"/>
    <property type="molecule type" value="Genomic_DNA"/>
</dbReference>
<dbReference type="RefSeq" id="WP_237904020.1">
    <property type="nucleotide sequence ID" value="NZ_CP059449.1"/>
</dbReference>
<dbReference type="SMR" id="Q9L867"/>
<dbReference type="GO" id="GO:0009055">
    <property type="term" value="F:electron transfer activity"/>
    <property type="evidence" value="ECO:0007669"/>
    <property type="project" value="UniProtKB-UniRule"/>
</dbReference>
<dbReference type="GO" id="GO:0010181">
    <property type="term" value="F:FMN binding"/>
    <property type="evidence" value="ECO:0007669"/>
    <property type="project" value="UniProtKB-UniRule"/>
</dbReference>
<dbReference type="GO" id="GO:0016652">
    <property type="term" value="F:oxidoreductase activity, acting on NAD(P)H as acceptor"/>
    <property type="evidence" value="ECO:0007669"/>
    <property type="project" value="UniProtKB-UniRule"/>
</dbReference>
<dbReference type="GO" id="GO:0016655">
    <property type="term" value="F:oxidoreductase activity, acting on NAD(P)H, quinone or similar compound as acceptor"/>
    <property type="evidence" value="ECO:0007669"/>
    <property type="project" value="InterPro"/>
</dbReference>
<dbReference type="Gene3D" id="3.40.50.360">
    <property type="match status" value="1"/>
</dbReference>
<dbReference type="HAMAP" id="MF_01216">
    <property type="entry name" value="Azoreductase_type1"/>
    <property type="match status" value="1"/>
</dbReference>
<dbReference type="InterPro" id="IPR003680">
    <property type="entry name" value="Flavodoxin_fold"/>
</dbReference>
<dbReference type="InterPro" id="IPR029039">
    <property type="entry name" value="Flavoprotein-like_sf"/>
</dbReference>
<dbReference type="InterPro" id="IPR050104">
    <property type="entry name" value="FMN-dep_NADH:Q_OxRdtase_AzoR1"/>
</dbReference>
<dbReference type="InterPro" id="IPR023048">
    <property type="entry name" value="NADH:quinone_OxRdtase_FMN_depd"/>
</dbReference>
<dbReference type="PANTHER" id="PTHR43741">
    <property type="entry name" value="FMN-DEPENDENT NADH-AZOREDUCTASE 1"/>
    <property type="match status" value="1"/>
</dbReference>
<dbReference type="PANTHER" id="PTHR43741:SF4">
    <property type="entry name" value="FMN-DEPENDENT NADH:QUINONE OXIDOREDUCTASE"/>
    <property type="match status" value="1"/>
</dbReference>
<dbReference type="Pfam" id="PF02525">
    <property type="entry name" value="Flavodoxin_2"/>
    <property type="match status" value="1"/>
</dbReference>
<dbReference type="SUPFAM" id="SSF52218">
    <property type="entry name" value="Flavoproteins"/>
    <property type="match status" value="1"/>
</dbReference>
<organism>
    <name type="scientific">Azospirillum brasilense</name>
    <dbReference type="NCBI Taxonomy" id="192"/>
    <lineage>
        <taxon>Bacteria</taxon>
        <taxon>Pseudomonadati</taxon>
        <taxon>Pseudomonadota</taxon>
        <taxon>Alphaproteobacteria</taxon>
        <taxon>Rhodospirillales</taxon>
        <taxon>Azospirillaceae</taxon>
        <taxon>Azospirillum</taxon>
    </lineage>
</organism>
<keyword id="KW-0285">Flavoprotein</keyword>
<keyword id="KW-0288">FMN</keyword>
<keyword id="KW-0520">NAD</keyword>
<keyword id="KW-0560">Oxidoreductase</keyword>
<gene>
    <name evidence="1" type="primary">azoR</name>
</gene>
<feature type="chain" id="PRO_0000166323" description="FMN-dependent NADH:quinone oxidoreductase">
    <location>
        <begin position="1"/>
        <end position="208"/>
    </location>
</feature>
<feature type="binding site" evidence="1">
    <location>
        <position position="9"/>
    </location>
    <ligand>
        <name>FMN</name>
        <dbReference type="ChEBI" id="CHEBI:58210"/>
    </ligand>
</feature>
<feature type="binding site" evidence="1">
    <location>
        <begin position="15"/>
        <end position="17"/>
    </location>
    <ligand>
        <name>FMN</name>
        <dbReference type="ChEBI" id="CHEBI:58210"/>
    </ligand>
</feature>
<feature type="binding site" evidence="1">
    <location>
        <begin position="96"/>
        <end position="99"/>
    </location>
    <ligand>
        <name>FMN</name>
        <dbReference type="ChEBI" id="CHEBI:58210"/>
    </ligand>
</feature>
<feature type="binding site" evidence="1">
    <location>
        <begin position="140"/>
        <end position="143"/>
    </location>
    <ligand>
        <name>FMN</name>
        <dbReference type="ChEBI" id="CHEBI:58210"/>
    </ligand>
</feature>
<name>AZOR_AZOBR</name>
<evidence type="ECO:0000255" key="1">
    <source>
        <dbReference type="HAMAP-Rule" id="MF_01216"/>
    </source>
</evidence>
<protein>
    <recommendedName>
        <fullName evidence="1">FMN-dependent NADH:quinone oxidoreductase</fullName>
        <ecNumber evidence="1">1.6.5.-</ecNumber>
    </recommendedName>
    <alternativeName>
        <fullName evidence="1">Azo-dye reductase</fullName>
    </alternativeName>
    <alternativeName>
        <fullName evidence="1">FMN-dependent NADH-azo compound oxidoreductase</fullName>
    </alternativeName>
    <alternativeName>
        <fullName evidence="1">FMN-dependent NADH-azoreductase</fullName>
        <ecNumber evidence="1">1.7.1.17</ecNumber>
    </alternativeName>
</protein>
<accession>Q9L867</accession>
<reference key="1">
    <citation type="journal article" date="1999" name="Chin. J. Biotechnol.">
        <title>Site-directed mutagenesis analysis of draTG genes and their downstream region from Azospirillum brasilense Yu62.</title>
        <authorList>
            <person name="Ma L."/>
            <person name="Wu Y."/>
            <person name="Wang J."/>
            <person name="Zhao Y."/>
            <person name="Li J."/>
        </authorList>
    </citation>
    <scope>NUCLEOTIDE SEQUENCE [GENOMIC DNA]</scope>
    <source>
        <strain>Yu62</strain>
    </source>
</reference>